<evidence type="ECO:0000255" key="1"/>
<evidence type="ECO:0000255" key="2">
    <source>
        <dbReference type="PROSITE-ProRule" id="PRU00175"/>
    </source>
</evidence>
<evidence type="ECO:0000255" key="3">
    <source>
        <dbReference type="PROSITE-ProRule" id="PRU00548"/>
    </source>
</evidence>
<evidence type="ECO:0000256" key="4">
    <source>
        <dbReference type="SAM" id="MobiDB-lite"/>
    </source>
</evidence>
<evidence type="ECO:0000269" key="5">
    <source>
    </source>
</evidence>
<evidence type="ECO:0000269" key="6">
    <source>
    </source>
</evidence>
<evidence type="ECO:0000269" key="7">
    <source>
    </source>
</evidence>
<evidence type="ECO:0000269" key="8">
    <source>
    </source>
</evidence>
<evidence type="ECO:0000269" key="9">
    <source>
    </source>
</evidence>
<evidence type="ECO:0000269" key="10">
    <source>
    </source>
</evidence>
<evidence type="ECO:0000269" key="11">
    <source>
    </source>
</evidence>
<evidence type="ECO:0000269" key="12">
    <source>
    </source>
</evidence>
<evidence type="ECO:0000269" key="13">
    <source>
    </source>
</evidence>
<evidence type="ECO:0000303" key="14">
    <source>
    </source>
</evidence>
<evidence type="ECO:0000303" key="15">
    <source>
    </source>
</evidence>
<evidence type="ECO:0000303" key="16">
    <source>
    </source>
</evidence>
<evidence type="ECO:0000303" key="17">
    <source>
    </source>
</evidence>
<evidence type="ECO:0000305" key="18"/>
<evidence type="ECO:0000305" key="19">
    <source>
    </source>
</evidence>
<evidence type="ECO:0000312" key="20">
    <source>
        <dbReference type="HGNC" id="HGNC:21158"/>
    </source>
</evidence>
<evidence type="ECO:0007829" key="21">
    <source>
        <dbReference type="PDB" id="8G7T"/>
    </source>
</evidence>
<accession>Q8IUD6</accession>
<accession>A0AVM5</accession>
<accession>B2R7G9</accession>
<accession>B6ZLM5</accession>
<accession>F5GX60</accession>
<accession>Q9BSE9</accession>
<gene>
    <name evidence="20" type="primary">RNF135</name>
    <name type="ORF">L13</name>
</gene>
<protein>
    <recommendedName>
        <fullName evidence="18">E3 ubiquitin-protein ligase RNF135</fullName>
        <ecNumber evidence="13">2.3.2.27</ecNumber>
    </recommendedName>
    <alternativeName>
        <fullName evidence="17">RIG-I E3 ubiquitin ligase</fullName>
        <shortName evidence="17">REUL</shortName>
    </alternativeName>
    <alternativeName>
        <fullName>RING finger protein 135</fullName>
    </alternativeName>
    <alternativeName>
        <fullName evidence="16">RING finger protein leading to RIG-I activation</fullName>
        <shortName evidence="16">Riplet</shortName>
    </alternativeName>
    <alternativeName>
        <fullName evidence="18">RING-type E3 ubiquitin transferase RNF135</fullName>
    </alternativeName>
</protein>
<dbReference type="EC" id="2.3.2.27" evidence="13"/>
<dbReference type="EMBL" id="AJ496729">
    <property type="protein sequence ID" value="CAD43140.1"/>
    <property type="molecule type" value="mRNA"/>
</dbReference>
<dbReference type="EMBL" id="AY598332">
    <property type="protein sequence ID" value="AAT06743.1"/>
    <property type="molecule type" value="mRNA"/>
</dbReference>
<dbReference type="EMBL" id="AB470605">
    <property type="protein sequence ID" value="BAG84604.1"/>
    <property type="molecule type" value="mRNA"/>
</dbReference>
<dbReference type="EMBL" id="AK122646">
    <property type="protein sequence ID" value="BAG53638.1"/>
    <property type="molecule type" value="mRNA"/>
</dbReference>
<dbReference type="EMBL" id="AK312979">
    <property type="protein sequence ID" value="BAG35816.1"/>
    <property type="molecule type" value="mRNA"/>
</dbReference>
<dbReference type="EMBL" id="AC138207">
    <property type="status" value="NOT_ANNOTATED_CDS"/>
    <property type="molecule type" value="Genomic_DNA"/>
</dbReference>
<dbReference type="EMBL" id="CH471147">
    <property type="protein sequence ID" value="EAW80286.1"/>
    <property type="molecule type" value="Genomic_DNA"/>
</dbReference>
<dbReference type="EMBL" id="BC005084">
    <property type="protein sequence ID" value="AAH05084.1"/>
    <property type="molecule type" value="mRNA"/>
</dbReference>
<dbReference type="EMBL" id="BC082262">
    <property type="status" value="NOT_ANNOTATED_CDS"/>
    <property type="molecule type" value="mRNA"/>
</dbReference>
<dbReference type="EMBL" id="BC126420">
    <property type="protein sequence ID" value="AAI26421.1"/>
    <property type="molecule type" value="mRNA"/>
</dbReference>
<dbReference type="EMBL" id="BC126422">
    <property type="protein sequence ID" value="AAI26423.1"/>
    <property type="molecule type" value="mRNA"/>
</dbReference>
<dbReference type="CCDS" id="CCDS11262.1">
    <molecule id="Q8IUD6-1"/>
</dbReference>
<dbReference type="CCDS" id="CCDS11263.1">
    <molecule id="Q8IUD6-2"/>
</dbReference>
<dbReference type="CCDS" id="CCDS54104.1">
    <molecule id="Q8IUD6-3"/>
</dbReference>
<dbReference type="RefSeq" id="NP_001171921.1">
    <molecule id="Q8IUD6-3"/>
    <property type="nucleotide sequence ID" value="NM_001184992.2"/>
</dbReference>
<dbReference type="RefSeq" id="NP_115698.3">
    <molecule id="Q8IUD6-1"/>
    <property type="nucleotide sequence ID" value="NM_032322.3"/>
</dbReference>
<dbReference type="RefSeq" id="NP_922921.1">
    <molecule id="Q8IUD6-2"/>
    <property type="nucleotide sequence ID" value="NM_197939.2"/>
</dbReference>
<dbReference type="PDB" id="7JL1">
    <property type="method" value="EM"/>
    <property type="resolution" value="3.90 A"/>
    <property type="chains" value="B=249-432"/>
</dbReference>
<dbReference type="PDB" id="7JL3">
    <property type="method" value="EM"/>
    <property type="resolution" value="4.20 A"/>
    <property type="chains" value="B/D/F=249-432"/>
</dbReference>
<dbReference type="PDB" id="8G7T">
    <property type="method" value="EM"/>
    <property type="resolution" value="3.20 A"/>
    <property type="chains" value="B/D=1-432"/>
</dbReference>
<dbReference type="PDB" id="8G7U">
    <property type="method" value="EM"/>
    <property type="resolution" value="4.00 A"/>
    <property type="chains" value="B/D=1-432"/>
</dbReference>
<dbReference type="PDB" id="8G7V">
    <property type="method" value="EM"/>
    <property type="resolution" value="3.90 A"/>
    <property type="chains" value="B/D=1-432"/>
</dbReference>
<dbReference type="PDBsum" id="7JL1"/>
<dbReference type="PDBsum" id="7JL3"/>
<dbReference type="PDBsum" id="8G7T"/>
<dbReference type="PDBsum" id="8G7U"/>
<dbReference type="PDBsum" id="8G7V"/>
<dbReference type="EMDB" id="EMD-22369"/>
<dbReference type="EMDB" id="EMD-22371"/>
<dbReference type="EMDB" id="EMD-29823"/>
<dbReference type="EMDB" id="EMD-29824"/>
<dbReference type="EMDB" id="EMD-29825"/>
<dbReference type="SMR" id="Q8IUD6"/>
<dbReference type="BioGRID" id="124009">
    <property type="interactions" value="32"/>
</dbReference>
<dbReference type="FunCoup" id="Q8IUD6">
    <property type="interactions" value="77"/>
</dbReference>
<dbReference type="IntAct" id="Q8IUD6">
    <property type="interactions" value="18"/>
</dbReference>
<dbReference type="STRING" id="9606.ENSP00000328340"/>
<dbReference type="GlyCosmos" id="Q8IUD6">
    <property type="glycosylation" value="1 site, 1 glycan"/>
</dbReference>
<dbReference type="GlyGen" id="Q8IUD6">
    <property type="glycosylation" value="2 sites, 1 O-linked glycan (2 sites)"/>
</dbReference>
<dbReference type="iPTMnet" id="Q8IUD6"/>
<dbReference type="PhosphoSitePlus" id="Q8IUD6"/>
<dbReference type="BioMuta" id="RNF135"/>
<dbReference type="DMDM" id="269849639"/>
<dbReference type="jPOST" id="Q8IUD6"/>
<dbReference type="MassIVE" id="Q8IUD6"/>
<dbReference type="PaxDb" id="9606-ENSP00000328340"/>
<dbReference type="PeptideAtlas" id="Q8IUD6"/>
<dbReference type="ProteomicsDB" id="24321"/>
<dbReference type="ProteomicsDB" id="70552">
    <molecule id="Q8IUD6-1"/>
</dbReference>
<dbReference type="ProteomicsDB" id="70553">
    <molecule id="Q8IUD6-2"/>
</dbReference>
<dbReference type="Pumba" id="Q8IUD6"/>
<dbReference type="Antibodypedia" id="15187">
    <property type="antibodies" value="158 antibodies from 23 providers"/>
</dbReference>
<dbReference type="DNASU" id="84282"/>
<dbReference type="Ensembl" id="ENST00000324689.8">
    <molecule id="Q8IUD6-2"/>
    <property type="protein sequence ID" value="ENSP00000323693.4"/>
    <property type="gene ID" value="ENSG00000181481.14"/>
</dbReference>
<dbReference type="Ensembl" id="ENST00000328381.10">
    <molecule id="Q8IUD6-1"/>
    <property type="protein sequence ID" value="ENSP00000328340.5"/>
    <property type="gene ID" value="ENSG00000181481.14"/>
</dbReference>
<dbReference type="Ensembl" id="ENST00000535306.6">
    <molecule id="Q8IUD6-3"/>
    <property type="protein sequence ID" value="ENSP00000440470.2"/>
    <property type="gene ID" value="ENSG00000181481.14"/>
</dbReference>
<dbReference type="Ensembl" id="ENST00000708425.1">
    <molecule id="Q8IUD6-2"/>
    <property type="protein sequence ID" value="ENSP00000517220.1"/>
    <property type="gene ID" value="ENSG00000291712.1"/>
</dbReference>
<dbReference type="Ensembl" id="ENST00000708426.1">
    <molecule id="Q8IUD6-1"/>
    <property type="protein sequence ID" value="ENSP00000517221.1"/>
    <property type="gene ID" value="ENSG00000291712.1"/>
</dbReference>
<dbReference type="Ensembl" id="ENST00000708427.1">
    <molecule id="Q8IUD6-3"/>
    <property type="protein sequence ID" value="ENSP00000517222.1"/>
    <property type="gene ID" value="ENSG00000291712.1"/>
</dbReference>
<dbReference type="GeneID" id="84282"/>
<dbReference type="KEGG" id="hsa:84282"/>
<dbReference type="MANE-Select" id="ENST00000328381.10">
    <property type="protein sequence ID" value="ENSP00000328340.5"/>
    <property type="RefSeq nucleotide sequence ID" value="NM_032322.4"/>
    <property type="RefSeq protein sequence ID" value="NP_115698.3"/>
</dbReference>
<dbReference type="UCSC" id="uc002hfz.4">
    <molecule id="Q8IUD6-1"/>
    <property type="organism name" value="human"/>
</dbReference>
<dbReference type="AGR" id="HGNC:21158"/>
<dbReference type="CTD" id="84282"/>
<dbReference type="DisGeNET" id="84282"/>
<dbReference type="GeneCards" id="RNF135"/>
<dbReference type="HGNC" id="HGNC:21158">
    <property type="gene designation" value="RNF135"/>
</dbReference>
<dbReference type="HPA" id="ENSG00000181481">
    <property type="expression patterns" value="Low tissue specificity"/>
</dbReference>
<dbReference type="MalaCards" id="RNF135"/>
<dbReference type="MIM" id="611358">
    <property type="type" value="gene"/>
</dbReference>
<dbReference type="neXtProt" id="NX_Q8IUD6"/>
<dbReference type="OpenTargets" id="ENSG00000181481"/>
<dbReference type="Orphanet" id="137634">
    <property type="disease" value="Overgrowth-macrocephaly-facial dysmorphism syndrome"/>
</dbReference>
<dbReference type="PharmGKB" id="PA134978537"/>
<dbReference type="VEuPathDB" id="HostDB:ENSG00000181481"/>
<dbReference type="eggNOG" id="KOG2177">
    <property type="taxonomic scope" value="Eukaryota"/>
</dbReference>
<dbReference type="GeneTree" id="ENSGT00830000128449"/>
<dbReference type="HOGENOM" id="CLU_032372_2_0_1"/>
<dbReference type="InParanoid" id="Q8IUD6"/>
<dbReference type="OMA" id="RCSHWAV"/>
<dbReference type="OrthoDB" id="6270329at2759"/>
<dbReference type="PAN-GO" id="Q8IUD6">
    <property type="GO annotations" value="4 GO annotations based on evolutionary models"/>
</dbReference>
<dbReference type="PhylomeDB" id="Q8IUD6"/>
<dbReference type="TreeFam" id="TF351089"/>
<dbReference type="PathwayCommons" id="Q8IUD6"/>
<dbReference type="Reactome" id="R-HSA-168928">
    <property type="pathway name" value="DDX58/IFIH1-mediated induction of interferon-alpha/beta"/>
</dbReference>
<dbReference type="Reactome" id="R-HSA-5689896">
    <property type="pathway name" value="Ovarian tumor domain proteases"/>
</dbReference>
<dbReference type="Reactome" id="R-HSA-918233">
    <property type="pathway name" value="TRAF3-dependent IRF activation pathway"/>
</dbReference>
<dbReference type="Reactome" id="R-HSA-933541">
    <property type="pathway name" value="TRAF6 mediated IRF7 activation"/>
</dbReference>
<dbReference type="Reactome" id="R-HSA-933542">
    <property type="pathway name" value="TRAF6 mediated NF-kB activation"/>
</dbReference>
<dbReference type="Reactome" id="R-HSA-933543">
    <property type="pathway name" value="NF-kB activation through FADD/RIP-1 pathway mediated by caspase-8 and -10"/>
</dbReference>
<dbReference type="Reactome" id="R-HSA-936440">
    <property type="pathway name" value="Negative regulators of DDX58/IFIH1 signaling"/>
</dbReference>
<dbReference type="Reactome" id="R-HSA-9705671">
    <property type="pathway name" value="SARS-CoV-2 activates/modulates innate and adaptive immune responses"/>
</dbReference>
<dbReference type="SignaLink" id="Q8IUD6"/>
<dbReference type="SIGNOR" id="Q8IUD6"/>
<dbReference type="UniPathway" id="UPA00143"/>
<dbReference type="BioGRID-ORCS" id="84282">
    <property type="hits" value="10 hits in 1188 CRISPR screens"/>
</dbReference>
<dbReference type="ChiTaRS" id="RNF135">
    <property type="organism name" value="human"/>
</dbReference>
<dbReference type="GeneWiki" id="RNF135"/>
<dbReference type="GenomeRNAi" id="84282"/>
<dbReference type="Pharos" id="Q8IUD6">
    <property type="development level" value="Tbio"/>
</dbReference>
<dbReference type="PRO" id="PR:Q8IUD6"/>
<dbReference type="Proteomes" id="UP000005640">
    <property type="component" value="Chromosome 17"/>
</dbReference>
<dbReference type="RNAct" id="Q8IUD6">
    <property type="molecule type" value="protein"/>
</dbReference>
<dbReference type="Bgee" id="ENSG00000181481">
    <property type="expression patterns" value="Expressed in pancreatic ductal cell and 188 other cell types or tissues"/>
</dbReference>
<dbReference type="ExpressionAtlas" id="Q8IUD6">
    <property type="expression patterns" value="baseline and differential"/>
</dbReference>
<dbReference type="GO" id="GO:0005737">
    <property type="term" value="C:cytoplasm"/>
    <property type="evidence" value="ECO:0000314"/>
    <property type="project" value="UniProtKB"/>
</dbReference>
<dbReference type="GO" id="GO:0010494">
    <property type="term" value="C:cytoplasmic stress granule"/>
    <property type="evidence" value="ECO:0000314"/>
    <property type="project" value="UniProtKB"/>
</dbReference>
<dbReference type="GO" id="GO:0005829">
    <property type="term" value="C:cytosol"/>
    <property type="evidence" value="ECO:0000304"/>
    <property type="project" value="Reactome"/>
</dbReference>
<dbReference type="GO" id="GO:1990904">
    <property type="term" value="C:ribonucleoprotein complex"/>
    <property type="evidence" value="ECO:0000314"/>
    <property type="project" value="UniProtKB"/>
</dbReference>
<dbReference type="GO" id="GO:0042802">
    <property type="term" value="F:identical protein binding"/>
    <property type="evidence" value="ECO:0000353"/>
    <property type="project" value="IntAct"/>
</dbReference>
<dbReference type="GO" id="GO:0043021">
    <property type="term" value="F:ribonucleoprotein complex binding"/>
    <property type="evidence" value="ECO:0000314"/>
    <property type="project" value="UniProtKB"/>
</dbReference>
<dbReference type="GO" id="GO:0039552">
    <property type="term" value="F:RIG-I binding"/>
    <property type="evidence" value="ECO:0000353"/>
    <property type="project" value="UniProtKB"/>
</dbReference>
<dbReference type="GO" id="GO:0061630">
    <property type="term" value="F:ubiquitin protein ligase activity"/>
    <property type="evidence" value="ECO:0000314"/>
    <property type="project" value="UniProtKB"/>
</dbReference>
<dbReference type="GO" id="GO:0004842">
    <property type="term" value="F:ubiquitin-protein transferase activity"/>
    <property type="evidence" value="ECO:0000314"/>
    <property type="project" value="UniProtKB"/>
</dbReference>
<dbReference type="GO" id="GO:0008270">
    <property type="term" value="F:zinc ion binding"/>
    <property type="evidence" value="ECO:0007669"/>
    <property type="project" value="UniProtKB-KW"/>
</dbReference>
<dbReference type="GO" id="GO:0140374">
    <property type="term" value="P:antiviral innate immune response"/>
    <property type="evidence" value="ECO:0000315"/>
    <property type="project" value="UniProtKB"/>
</dbReference>
<dbReference type="GO" id="GO:0010994">
    <property type="term" value="P:free ubiquitin chain polymerization"/>
    <property type="evidence" value="ECO:0000314"/>
    <property type="project" value="UniProtKB"/>
</dbReference>
<dbReference type="GO" id="GO:0045087">
    <property type="term" value="P:innate immune response"/>
    <property type="evidence" value="ECO:0000304"/>
    <property type="project" value="Reactome"/>
</dbReference>
<dbReference type="GO" id="GO:0032728">
    <property type="term" value="P:positive regulation of interferon-beta production"/>
    <property type="evidence" value="ECO:0000315"/>
    <property type="project" value="UniProtKB"/>
</dbReference>
<dbReference type="GO" id="GO:0051260">
    <property type="term" value="P:protein homooligomerization"/>
    <property type="evidence" value="ECO:0000314"/>
    <property type="project" value="UniProtKB"/>
</dbReference>
<dbReference type="GO" id="GO:0070534">
    <property type="term" value="P:protein K63-linked ubiquitination"/>
    <property type="evidence" value="ECO:0000314"/>
    <property type="project" value="UniProtKB"/>
</dbReference>
<dbReference type="GO" id="GO:0000209">
    <property type="term" value="P:protein polyubiquitination"/>
    <property type="evidence" value="ECO:0000314"/>
    <property type="project" value="UniProtKB"/>
</dbReference>
<dbReference type="GO" id="GO:0016567">
    <property type="term" value="P:protein ubiquitination"/>
    <property type="evidence" value="ECO:0000314"/>
    <property type="project" value="UniProtKB"/>
</dbReference>
<dbReference type="GO" id="GO:0045088">
    <property type="term" value="P:regulation of innate immune response"/>
    <property type="evidence" value="ECO:0000315"/>
    <property type="project" value="UniProtKB"/>
</dbReference>
<dbReference type="GO" id="GO:0039529">
    <property type="term" value="P:RIG-I signaling pathway"/>
    <property type="evidence" value="ECO:0000314"/>
    <property type="project" value="UniProtKB"/>
</dbReference>
<dbReference type="CDD" id="cd16604">
    <property type="entry name" value="RING-HC_TRIM47-like_C-IV"/>
    <property type="match status" value="1"/>
</dbReference>
<dbReference type="CDD" id="cd12902">
    <property type="entry name" value="SPRY_PRY_RNF135"/>
    <property type="match status" value="1"/>
</dbReference>
<dbReference type="FunFam" id="2.60.120.920:FF:000059">
    <property type="entry name" value="E3 ubiquitin-protein ligase RNF135"/>
    <property type="match status" value="1"/>
</dbReference>
<dbReference type="FunFam" id="3.30.40.10:FF:000545">
    <property type="entry name" value="E3 ubiquitin-protein ligase RNF135"/>
    <property type="match status" value="1"/>
</dbReference>
<dbReference type="Gene3D" id="2.60.120.920">
    <property type="match status" value="1"/>
</dbReference>
<dbReference type="Gene3D" id="3.30.40.10">
    <property type="entry name" value="Zinc/RING finger domain, C3HC4 (zinc finger)"/>
    <property type="match status" value="1"/>
</dbReference>
<dbReference type="InterPro" id="IPR001870">
    <property type="entry name" value="B30.2/SPRY"/>
</dbReference>
<dbReference type="InterPro" id="IPR043136">
    <property type="entry name" value="B30.2/SPRY_sf"/>
</dbReference>
<dbReference type="InterPro" id="IPR003879">
    <property type="entry name" value="Butyrophylin_SPRY"/>
</dbReference>
<dbReference type="InterPro" id="IPR013320">
    <property type="entry name" value="ConA-like_dom_sf"/>
</dbReference>
<dbReference type="InterPro" id="IPR051051">
    <property type="entry name" value="E3_ubiq-ligase_TRIM/RNF"/>
</dbReference>
<dbReference type="InterPro" id="IPR006574">
    <property type="entry name" value="PRY"/>
</dbReference>
<dbReference type="InterPro" id="IPR042723">
    <property type="entry name" value="RNF135_SPRY_PRY_dom"/>
</dbReference>
<dbReference type="InterPro" id="IPR003877">
    <property type="entry name" value="SPRY_dom"/>
</dbReference>
<dbReference type="InterPro" id="IPR001841">
    <property type="entry name" value="Znf_RING"/>
</dbReference>
<dbReference type="InterPro" id="IPR013083">
    <property type="entry name" value="Znf_RING/FYVE/PHD"/>
</dbReference>
<dbReference type="InterPro" id="IPR017907">
    <property type="entry name" value="Znf_RING_CS"/>
</dbReference>
<dbReference type="PANTHER" id="PTHR25465">
    <property type="entry name" value="B-BOX DOMAIN CONTAINING"/>
    <property type="match status" value="1"/>
</dbReference>
<dbReference type="PANTHER" id="PTHR25465:SF41">
    <property type="entry name" value="E3 UBIQUITIN-PROTEIN LIGASE RNF135"/>
    <property type="match status" value="1"/>
</dbReference>
<dbReference type="Pfam" id="PF00622">
    <property type="entry name" value="SPRY"/>
    <property type="match status" value="1"/>
</dbReference>
<dbReference type="Pfam" id="PF15227">
    <property type="entry name" value="zf-C3HC4_4"/>
    <property type="match status" value="1"/>
</dbReference>
<dbReference type="PRINTS" id="PR01407">
    <property type="entry name" value="BUTYPHLNCDUF"/>
</dbReference>
<dbReference type="SMART" id="SM00589">
    <property type="entry name" value="PRY"/>
    <property type="match status" value="1"/>
</dbReference>
<dbReference type="SMART" id="SM00184">
    <property type="entry name" value="RING"/>
    <property type="match status" value="1"/>
</dbReference>
<dbReference type="SMART" id="SM00449">
    <property type="entry name" value="SPRY"/>
    <property type="match status" value="1"/>
</dbReference>
<dbReference type="SUPFAM" id="SSF49899">
    <property type="entry name" value="Concanavalin A-like lectins/glucanases"/>
    <property type="match status" value="1"/>
</dbReference>
<dbReference type="SUPFAM" id="SSF57850">
    <property type="entry name" value="RING/U-box"/>
    <property type="match status" value="1"/>
</dbReference>
<dbReference type="PROSITE" id="PS50188">
    <property type="entry name" value="B302_SPRY"/>
    <property type="match status" value="1"/>
</dbReference>
<dbReference type="PROSITE" id="PS00518">
    <property type="entry name" value="ZF_RING_1"/>
    <property type="match status" value="1"/>
</dbReference>
<dbReference type="PROSITE" id="PS50089">
    <property type="entry name" value="ZF_RING_2"/>
    <property type="match status" value="1"/>
</dbReference>
<comment type="function">
    <text evidence="6 8 10 11 12 13 19">E2-dependent E3 ubiquitin-protein ligase that functions as a RIGI coreceptor in the sensing of viral RNAs in cell cytoplasm and the activation of the antiviral innate immune response (PubMed:19017631, PubMed:19484123, PubMed:21147464, PubMed:23950712, PubMed:28469175, PubMed:31006531). Together with the UBE2D3, UBE2N and UB2V1 E2 ligases, catalyzes the 'Lys-63'-linked polyubiquitination of RIGI oligomerized on viral RNAs, an essential step in the activation of the RIG-I signaling pathway (PubMed:19017631, PubMed:21147464, PubMed:28469175, PubMed:31006531). Through a ubiquitin-independent parallel mechanism, which consists in bridging RIGI filaments forming on longer viral RNAs, further activates the RIG-I signaling pathway (PubMed:31006531). This second mechanism that synergizes with the ubiquitin-dependent one would thereby allow an RNA length-dependent regulation of the RIG-I signaling pathway (Probable). Associated with the E2 ligase UBE2N, also constitutively synthesizes unanchored 'Lys-63'-linked polyubiquitin chains that may also activate the RIG-I signaling pathway (PubMed:28469175, PubMed:31006531).</text>
</comment>
<comment type="catalytic activity">
    <reaction evidence="13">
        <text>S-ubiquitinyl-[E2 ubiquitin-conjugating enzyme]-L-cysteine + [acceptor protein]-L-lysine = [E2 ubiquitin-conjugating enzyme]-L-cysteine + N(6)-ubiquitinyl-[acceptor protein]-L-lysine.</text>
        <dbReference type="EC" id="2.3.2.27"/>
    </reaction>
</comment>
<comment type="pathway">
    <text evidence="13">Protein modification; protein ubiquitination.</text>
</comment>
<comment type="subunit">
    <text evidence="6 8 9 11 12 13">Homodimer (PubMed:31006531). Interacts (homodimer) with RIGI (double-stranded RNA-bound oligomeric form); involved in both RIGI ubiquitination, oligomerization into filaments associated with viral RNAs and the bridging of these filaments (PubMed:19017631, PubMed:19484123, PubMed:23950712, PubMed:28469175, PubMed:31006531). Interacts with UBE2D3 and UBE2N; E2 ubiquitin ligases involved in RNF135-mediated ubiquitination of RIGI and activation of the RIG-I signaling pathway (PubMed:28469175). Interacts with PCBP2 (PubMed:19881509).</text>
</comment>
<comment type="interaction">
    <interactant intactId="EBI-9916363">
        <id>Q8IUD6</id>
    </interactant>
    <interactant intactId="EBI-10171902">
        <id>P56545-3</id>
        <label>CTBP2</label>
    </interactant>
    <organismsDiffer>false</organismsDiffer>
    <experiments>3</experiments>
</comment>
<comment type="interaction">
    <interactant intactId="EBI-9916363">
        <id>Q8IUD6</id>
    </interactant>
    <interactant intactId="EBI-514206">
        <id>Q9UBT7</id>
        <label>CTNNAL1</label>
    </interactant>
    <organismsDiffer>false</organismsDiffer>
    <experiments>7</experiments>
</comment>
<comment type="interaction">
    <interactant intactId="EBI-9916363">
        <id>Q8IUD6</id>
    </interactant>
    <interactant intactId="EBI-618309">
        <id>Q08379</id>
        <label>GOLGA2</label>
    </interactant>
    <organismsDiffer>false</organismsDiffer>
    <experiments>6</experiments>
</comment>
<comment type="interaction">
    <interactant intactId="EBI-9916363">
        <id>Q8IUD6</id>
    </interactant>
    <interactant intactId="EBI-7116203">
        <id>O75031</id>
        <label>HSF2BP</label>
    </interactant>
    <organismsDiffer>false</organismsDiffer>
    <experiments>4</experiments>
</comment>
<comment type="interaction">
    <interactant intactId="EBI-9916363">
        <id>Q8IUD6</id>
    </interactant>
    <interactant intactId="EBI-9916363">
        <id>Q8IUD6</id>
        <label>RNF135</label>
    </interactant>
    <organismsDiffer>false</organismsDiffer>
    <experiments>4</experiments>
</comment>
<comment type="interaction">
    <interactant intactId="EBI-9916363">
        <id>Q8IUD6</id>
    </interactant>
    <interactant intactId="EBI-11139477">
        <id>Q96N21</id>
        <label>TEPSIN</label>
    </interactant>
    <organismsDiffer>false</organismsDiffer>
    <experiments>3</experiments>
</comment>
<comment type="subcellular location">
    <subcellularLocation>
        <location evidence="8 11">Cytoplasm</location>
    </subcellularLocation>
    <subcellularLocation>
        <location evidence="11">Cytoplasm</location>
        <location evidence="11">Stress granule</location>
    </subcellularLocation>
</comment>
<comment type="alternative products">
    <event type="alternative splicing"/>
    <isoform>
        <id>Q8IUD6-1</id>
        <name>1</name>
        <sequence type="displayed"/>
    </isoform>
    <isoform>
        <id>Q8IUD6-2</id>
        <name>2</name>
        <sequence type="described" ref="VSP_023785 VSP_023786"/>
    </isoform>
    <isoform>
        <id>Q8IUD6-3</id>
        <name>3</name>
        <sequence type="described" ref="VSP_045359 VSP_045360"/>
    </isoform>
</comment>
<comment type="tissue specificity">
    <text evidence="6">Expressed in skeletal muscle, spleen, kidney, placenta, prostate, stomach, thyroid and tongue. Also weakly expressed in heart, thymus, liver and lung.</text>
</comment>
<comment type="domain">
    <text evidence="12 13">The B30.2/SPRY domain mediates the interaction with the substrate RIGI.</text>
</comment>
<comment type="domain">
    <text evidence="13">The coiled-coil domains mediate homodimerization and the bridging of viral RNA-associated RIGI filaments.</text>
</comment>
<comment type="PTM">
    <text evidence="11">(Microbial infection) Cleaved and inactivated by hepatitis C virus NS3/NS4A.</text>
</comment>
<comment type="online information" name="Leiden Open Variation Database">
    <link uri="https://databases.lovd.nl/shared/variants/RNF135/unique"/>
    <text>Ring finger protein 135 (RNF135)</text>
</comment>
<reference key="1">
    <citation type="journal article" date="2003" name="Genes Chromosomes Cancer">
        <title>Complete physical map and gene content of the human NF1 tumor suppressor region in human and mouse.</title>
        <authorList>
            <person name="Jenne D.E."/>
            <person name="Tinschert S."/>
            <person name="Dorschner M.O."/>
            <person name="Hameister H."/>
            <person name="Stephens K."/>
            <person name="Kehrer-Sawatzki H."/>
        </authorList>
    </citation>
    <scope>NUCLEOTIDE SEQUENCE [MRNA] (ISOFORM 1)</scope>
</reference>
<reference key="2">
    <citation type="journal article" date="2004" name="Oncogene">
        <title>Suppression subtractive hybridization and expression profiling identifies a unique set of genes overexpressed in non-small-cell lung cancer.</title>
        <authorList>
            <person name="Petroziello J."/>
            <person name="Yamane A."/>
            <person name="Westendorf L."/>
            <person name="Thompson M."/>
            <person name="McDonagh C."/>
            <person name="Cerveny C."/>
            <person name="Law C.-L."/>
            <person name="Wahl A."/>
            <person name="Carter P."/>
        </authorList>
    </citation>
    <scope>NUCLEOTIDE SEQUENCE [MRNA] (ISOFORM 1)</scope>
</reference>
<reference key="3">
    <citation type="journal article" date="2009" name="J. Biol. Chem.">
        <title>Riplet/RNF135, a RING finger protein, ubiquitinates RIG-I to promote interferon-beta induction during the early phase of viral infection.</title>
        <authorList>
            <person name="Oshiumi H."/>
            <person name="Matsumoto M."/>
            <person name="Hatakeyama S."/>
            <person name="Seya T."/>
        </authorList>
    </citation>
    <scope>NUCLEOTIDE SEQUENCE [MRNA] (ISOFORM 1)</scope>
    <scope>FUNCTION</scope>
    <scope>INTERACTION WITH RIGI</scope>
    <scope>TISSUE SPECIFICITY</scope>
</reference>
<reference key="4">
    <citation type="journal article" date="2004" name="Nat. Genet.">
        <title>Complete sequencing and characterization of 21,243 full-length human cDNAs.</title>
        <authorList>
            <person name="Ota T."/>
            <person name="Suzuki Y."/>
            <person name="Nishikawa T."/>
            <person name="Otsuki T."/>
            <person name="Sugiyama T."/>
            <person name="Irie R."/>
            <person name="Wakamatsu A."/>
            <person name="Hayashi K."/>
            <person name="Sato H."/>
            <person name="Nagai K."/>
            <person name="Kimura K."/>
            <person name="Makita H."/>
            <person name="Sekine M."/>
            <person name="Obayashi M."/>
            <person name="Nishi T."/>
            <person name="Shibahara T."/>
            <person name="Tanaka T."/>
            <person name="Ishii S."/>
            <person name="Yamamoto J."/>
            <person name="Saito K."/>
            <person name="Kawai Y."/>
            <person name="Isono Y."/>
            <person name="Nakamura Y."/>
            <person name="Nagahari K."/>
            <person name="Murakami K."/>
            <person name="Yasuda T."/>
            <person name="Iwayanagi T."/>
            <person name="Wagatsuma M."/>
            <person name="Shiratori A."/>
            <person name="Sudo H."/>
            <person name="Hosoiri T."/>
            <person name="Kaku Y."/>
            <person name="Kodaira H."/>
            <person name="Kondo H."/>
            <person name="Sugawara M."/>
            <person name="Takahashi M."/>
            <person name="Kanda K."/>
            <person name="Yokoi T."/>
            <person name="Furuya T."/>
            <person name="Kikkawa E."/>
            <person name="Omura Y."/>
            <person name="Abe K."/>
            <person name="Kamihara K."/>
            <person name="Katsuta N."/>
            <person name="Sato K."/>
            <person name="Tanikawa M."/>
            <person name="Yamazaki M."/>
            <person name="Ninomiya K."/>
            <person name="Ishibashi T."/>
            <person name="Yamashita H."/>
            <person name="Murakawa K."/>
            <person name="Fujimori K."/>
            <person name="Tanai H."/>
            <person name="Kimata M."/>
            <person name="Watanabe M."/>
            <person name="Hiraoka S."/>
            <person name="Chiba Y."/>
            <person name="Ishida S."/>
            <person name="Ono Y."/>
            <person name="Takiguchi S."/>
            <person name="Watanabe S."/>
            <person name="Yosida M."/>
            <person name="Hotuta T."/>
            <person name="Kusano J."/>
            <person name="Kanehori K."/>
            <person name="Takahashi-Fujii A."/>
            <person name="Hara H."/>
            <person name="Tanase T.-O."/>
            <person name="Nomura Y."/>
            <person name="Togiya S."/>
            <person name="Komai F."/>
            <person name="Hara R."/>
            <person name="Takeuchi K."/>
            <person name="Arita M."/>
            <person name="Imose N."/>
            <person name="Musashino K."/>
            <person name="Yuuki H."/>
            <person name="Oshima A."/>
            <person name="Sasaki N."/>
            <person name="Aotsuka S."/>
            <person name="Yoshikawa Y."/>
            <person name="Matsunawa H."/>
            <person name="Ichihara T."/>
            <person name="Shiohata N."/>
            <person name="Sano S."/>
            <person name="Moriya S."/>
            <person name="Momiyama H."/>
            <person name="Satoh N."/>
            <person name="Takami S."/>
            <person name="Terashima Y."/>
            <person name="Suzuki O."/>
            <person name="Nakagawa S."/>
            <person name="Senoh A."/>
            <person name="Mizoguchi H."/>
            <person name="Goto Y."/>
            <person name="Shimizu F."/>
            <person name="Wakebe H."/>
            <person name="Hishigaki H."/>
            <person name="Watanabe T."/>
            <person name="Sugiyama A."/>
            <person name="Takemoto M."/>
            <person name="Kawakami B."/>
            <person name="Yamazaki M."/>
            <person name="Watanabe K."/>
            <person name="Kumagai A."/>
            <person name="Itakura S."/>
            <person name="Fukuzumi Y."/>
            <person name="Fujimori Y."/>
            <person name="Komiyama M."/>
            <person name="Tashiro H."/>
            <person name="Tanigami A."/>
            <person name="Fujiwara T."/>
            <person name="Ono T."/>
            <person name="Yamada K."/>
            <person name="Fujii Y."/>
            <person name="Ozaki K."/>
            <person name="Hirao M."/>
            <person name="Ohmori Y."/>
            <person name="Kawabata A."/>
            <person name="Hikiji T."/>
            <person name="Kobatake N."/>
            <person name="Inagaki H."/>
            <person name="Ikema Y."/>
            <person name="Okamoto S."/>
            <person name="Okitani R."/>
            <person name="Kawakami T."/>
            <person name="Noguchi S."/>
            <person name="Itoh T."/>
            <person name="Shigeta K."/>
            <person name="Senba T."/>
            <person name="Matsumura K."/>
            <person name="Nakajima Y."/>
            <person name="Mizuno T."/>
            <person name="Morinaga M."/>
            <person name="Sasaki M."/>
            <person name="Togashi T."/>
            <person name="Oyama M."/>
            <person name="Hata H."/>
            <person name="Watanabe M."/>
            <person name="Komatsu T."/>
            <person name="Mizushima-Sugano J."/>
            <person name="Satoh T."/>
            <person name="Shirai Y."/>
            <person name="Takahashi Y."/>
            <person name="Nakagawa K."/>
            <person name="Okumura K."/>
            <person name="Nagase T."/>
            <person name="Nomura N."/>
            <person name="Kikuchi H."/>
            <person name="Masuho Y."/>
            <person name="Yamashita R."/>
            <person name="Nakai K."/>
            <person name="Yada T."/>
            <person name="Nakamura Y."/>
            <person name="Ohara O."/>
            <person name="Isogai T."/>
            <person name="Sugano S."/>
        </authorList>
    </citation>
    <scope>NUCLEOTIDE SEQUENCE [LARGE SCALE MRNA] (ISOFORM 2)</scope>
    <source>
        <tissue>Mammary gland</tissue>
        <tissue>Urinary bladder</tissue>
    </source>
</reference>
<reference key="5">
    <citation type="journal article" date="2006" name="Nature">
        <title>DNA sequence of human chromosome 17 and analysis of rearrangement in the human lineage.</title>
        <authorList>
            <person name="Zody M.C."/>
            <person name="Garber M."/>
            <person name="Adams D.J."/>
            <person name="Sharpe T."/>
            <person name="Harrow J."/>
            <person name="Lupski J.R."/>
            <person name="Nicholson C."/>
            <person name="Searle S.M."/>
            <person name="Wilming L."/>
            <person name="Young S.K."/>
            <person name="Abouelleil A."/>
            <person name="Allen N.R."/>
            <person name="Bi W."/>
            <person name="Bloom T."/>
            <person name="Borowsky M.L."/>
            <person name="Bugalter B.E."/>
            <person name="Butler J."/>
            <person name="Chang J.L."/>
            <person name="Chen C.-K."/>
            <person name="Cook A."/>
            <person name="Corum B."/>
            <person name="Cuomo C.A."/>
            <person name="de Jong P.J."/>
            <person name="DeCaprio D."/>
            <person name="Dewar K."/>
            <person name="FitzGerald M."/>
            <person name="Gilbert J."/>
            <person name="Gibson R."/>
            <person name="Gnerre S."/>
            <person name="Goldstein S."/>
            <person name="Grafham D.V."/>
            <person name="Grocock R."/>
            <person name="Hafez N."/>
            <person name="Hagopian D.S."/>
            <person name="Hart E."/>
            <person name="Norman C.H."/>
            <person name="Humphray S."/>
            <person name="Jaffe D.B."/>
            <person name="Jones M."/>
            <person name="Kamal M."/>
            <person name="Khodiyar V.K."/>
            <person name="LaButti K."/>
            <person name="Laird G."/>
            <person name="Lehoczky J."/>
            <person name="Liu X."/>
            <person name="Lokyitsang T."/>
            <person name="Loveland J."/>
            <person name="Lui A."/>
            <person name="Macdonald P."/>
            <person name="Major J.E."/>
            <person name="Matthews L."/>
            <person name="Mauceli E."/>
            <person name="McCarroll S.A."/>
            <person name="Mihalev A.H."/>
            <person name="Mudge J."/>
            <person name="Nguyen C."/>
            <person name="Nicol R."/>
            <person name="O'Leary S.B."/>
            <person name="Osoegawa K."/>
            <person name="Schwartz D.C."/>
            <person name="Shaw-Smith C."/>
            <person name="Stankiewicz P."/>
            <person name="Steward C."/>
            <person name="Swarbreck D."/>
            <person name="Venkataraman V."/>
            <person name="Whittaker C.A."/>
            <person name="Yang X."/>
            <person name="Zimmer A.R."/>
            <person name="Bradley A."/>
            <person name="Hubbard T."/>
            <person name="Birren B.W."/>
            <person name="Rogers J."/>
            <person name="Lander E.S."/>
            <person name="Nusbaum C."/>
        </authorList>
    </citation>
    <scope>NUCLEOTIDE SEQUENCE [LARGE SCALE GENOMIC DNA]</scope>
</reference>
<reference key="6">
    <citation type="submission" date="2005-09" db="EMBL/GenBank/DDBJ databases">
        <authorList>
            <person name="Mural R.J."/>
            <person name="Istrail S."/>
            <person name="Sutton G."/>
            <person name="Florea L."/>
            <person name="Halpern A.L."/>
            <person name="Mobarry C.M."/>
            <person name="Lippert R."/>
            <person name="Walenz B."/>
            <person name="Shatkay H."/>
            <person name="Dew I."/>
            <person name="Miller J.R."/>
            <person name="Flanigan M.J."/>
            <person name="Edwards N.J."/>
            <person name="Bolanos R."/>
            <person name="Fasulo D."/>
            <person name="Halldorsson B.V."/>
            <person name="Hannenhalli S."/>
            <person name="Turner R."/>
            <person name="Yooseph S."/>
            <person name="Lu F."/>
            <person name="Nusskern D.R."/>
            <person name="Shue B.C."/>
            <person name="Zheng X.H."/>
            <person name="Zhong F."/>
            <person name="Delcher A.L."/>
            <person name="Huson D.H."/>
            <person name="Kravitz S.A."/>
            <person name="Mouchard L."/>
            <person name="Reinert K."/>
            <person name="Remington K.A."/>
            <person name="Clark A.G."/>
            <person name="Waterman M.S."/>
            <person name="Eichler E.E."/>
            <person name="Adams M.D."/>
            <person name="Hunkapiller M.W."/>
            <person name="Myers E.W."/>
            <person name="Venter J.C."/>
        </authorList>
    </citation>
    <scope>NUCLEOTIDE SEQUENCE [LARGE SCALE GENOMIC DNA]</scope>
</reference>
<reference key="7">
    <citation type="journal article" date="2004" name="Genome Res.">
        <title>The status, quality, and expansion of the NIH full-length cDNA project: the Mammalian Gene Collection (MGC).</title>
        <authorList>
            <consortium name="The MGC Project Team"/>
        </authorList>
    </citation>
    <scope>NUCLEOTIDE SEQUENCE [LARGE SCALE MRNA] (ISOFORMS 1; 2 AND 3)</scope>
    <source>
        <tissue>Brain</tissue>
        <tissue>Lung carcinoma</tissue>
        <tissue>Placenta</tissue>
    </source>
</reference>
<reference key="8">
    <citation type="journal article" date="2009" name="Nat. Immunol.">
        <title>PCBP2 mediates degradation of the adaptor MAVS via the HECT ubiquitin ligase AIP4.</title>
        <authorList>
            <person name="You F."/>
            <person name="Sun H."/>
            <person name="Zhou X."/>
            <person name="Sun W."/>
            <person name="Liang S."/>
            <person name="Zhai Z."/>
            <person name="Jiang Z."/>
        </authorList>
    </citation>
    <scope>INTERACTION WITH PCBP2</scope>
</reference>
<reference key="9">
    <citation type="journal article" date="2009" name="PLoS ONE">
        <title>REUL is a novel E3 ubiquitin ligase and stimulator of retinoic-acid-inducible gene-I.</title>
        <authorList>
            <person name="Gao D."/>
            <person name="Yang Y.K."/>
            <person name="Wang R.P."/>
            <person name="Zhou X."/>
            <person name="Diao F.C."/>
            <person name="Li M.D."/>
            <person name="Zhai Z.H."/>
            <person name="Jiang Z.F."/>
            <person name="Chen D.Y."/>
        </authorList>
    </citation>
    <scope>FUNCTION</scope>
    <scope>INTERACTION WITH RIGI</scope>
    <scope>SUBCELLULAR LOCATION</scope>
</reference>
<reference key="10">
    <citation type="journal article" date="2010" name="Cell Host Microbe">
        <title>The ubiquitin ligase Riplet is essential for RIG-I-dependent innate immune responses to RNA virus infection.</title>
        <authorList>
            <person name="Oshiumi H."/>
            <person name="Miyashita M."/>
            <person name="Inoue N."/>
            <person name="Okabe M."/>
            <person name="Matsumoto M."/>
            <person name="Seya T."/>
        </authorList>
    </citation>
    <scope>FUNCTION</scope>
</reference>
<reference key="11">
    <citation type="journal article" date="2013" name="PLoS Pathog.">
        <title>A distinct role of Riplet-mediated K63-Linked polyubiquitination of the RIG-I repressor domain in human antiviral innate immune responses.</title>
        <authorList>
            <person name="Oshiumi H."/>
            <person name="Miyashita M."/>
            <person name="Matsumoto M."/>
            <person name="Seya T."/>
        </authorList>
    </citation>
    <scope>FUNCTION</scope>
    <scope>INTERACTION WITH RIGI</scope>
    <scope>SUBCELLULAR LOCATION</scope>
    <scope>CLEAVAGE BY HEPATITIS C VIRUS NS3/NS4A (MICROBIAL INFECTION)</scope>
    <scope>MUTAGENESIS OF 16-GLU--ASP-18</scope>
</reference>
<reference key="12">
    <citation type="journal article" date="2017" name="Nat. Commun.">
        <title>Ube2D3 and Ube2N are essential for RIG-I-mediated MAVS aggregation in antiviral innate immunity.</title>
        <authorList>
            <person name="Shi Y."/>
            <person name="Yuan B."/>
            <person name="Zhu W."/>
            <person name="Zhang R."/>
            <person name="Li L."/>
            <person name="Hao X."/>
            <person name="Chen S."/>
            <person name="Hou F."/>
        </authorList>
    </citation>
    <scope>FUNCTION</scope>
    <scope>INTERACTION WITH RIGI; UBE2D3 AND UBE2N</scope>
    <scope>DOMAIN</scope>
    <scope>MUTAGENESIS OF CYS-21 AND CYS-24</scope>
</reference>
<reference key="13">
    <citation type="journal article" date="2019" name="Cell">
        <title>Ubiquitin-Dependent and -Independent Roles of E3 Ligase RIPLET in Innate Immunity.</title>
        <authorList>
            <person name="Cadena C."/>
            <person name="Ahmad S."/>
            <person name="Xavier A."/>
            <person name="Willemsen J."/>
            <person name="Park S."/>
            <person name="Park J.W."/>
            <person name="Oh S.W."/>
            <person name="Fujita T."/>
            <person name="Hou F."/>
            <person name="Binder M."/>
            <person name="Hur S."/>
        </authorList>
    </citation>
    <scope>FUNCTION</scope>
    <scope>CATALYTIC ACTIVITY</scope>
    <scope>PATHWAY</scope>
    <scope>SUBUNIT</scope>
    <scope>INTERACTION WITH RIGI</scope>
    <scope>DOMAIN</scope>
</reference>
<reference key="14">
    <citation type="journal article" date="2007" name="Nat. Genet.">
        <title>Mutations in RNF135, a gene within the NF1 microdeletion region, cause phenotypic abnormalities including overgrowth.</title>
        <authorList>
            <person name="Douglas J."/>
            <person name="Cilliers D."/>
            <person name="Coleman K."/>
            <person name="Tatton-Brown K."/>
            <person name="Barker K."/>
            <person name="Bernhard B."/>
            <person name="Burn J."/>
            <person name="Huson S."/>
            <person name="Josifova D."/>
            <person name="Lacombe D."/>
            <person name="Malik M."/>
            <person name="Mansour S."/>
            <person name="Reid E."/>
            <person name="Cormier-Daire V."/>
            <person name="Cole T."/>
            <person name="Rahman N."/>
        </authorList>
    </citation>
    <scope>VARIANT HIS-286</scope>
</reference>
<reference key="15">
    <citation type="journal article" date="2009" name="Am. J. Med. Genet. A">
        <title>RNF135 mutations are not present in patients with Sotos syndrome-like features.</title>
        <authorList>
            <person name="Visser R."/>
            <person name="Koelma N."/>
            <person name="Vijfhuizen L."/>
            <person name="van der Wielen M.J."/>
            <person name="Kant S.G."/>
            <person name="Breuning M.H."/>
            <person name="Wit J.M."/>
            <person name="Losekoot M."/>
        </authorList>
    </citation>
    <scope>VARIANTS GLN-71; PRO-108; LYS-115 AND CYS-415</scope>
</reference>
<keyword id="KW-0002">3D-structure</keyword>
<keyword id="KW-0025">Alternative splicing</keyword>
<keyword id="KW-0175">Coiled coil</keyword>
<keyword id="KW-0963">Cytoplasm</keyword>
<keyword id="KW-0391">Immunity</keyword>
<keyword id="KW-0399">Innate immunity</keyword>
<keyword id="KW-0479">Metal-binding</keyword>
<keyword id="KW-1267">Proteomics identification</keyword>
<keyword id="KW-1185">Reference proteome</keyword>
<keyword id="KW-0808">Transferase</keyword>
<keyword id="KW-0833">Ubl conjugation pathway</keyword>
<keyword id="KW-0862">Zinc</keyword>
<keyword id="KW-0863">Zinc-finger</keyword>
<sequence length="432" mass="47888">MAGLGLGSAVPVWLAEDDLGCIICQGLLDWPATLPCGHSFCRHCLEALWGARDARRWACPTCRQGAAQQPHLRKNTLLQDLADKYRRAAREIQAGSDPAHCPCPGSSSLSSAAARPRRRPELQRVAVEKSITEVAQELTELVEHLVDIVRSLQNQRPLSESGPDNELSILGKAFSSGVDLSMASPKLVTSDTAAGKIRDILHDLEEIQEKLQESVTWKEAPEAQMQGELLEAPSSSSCPLPDQSHPALRRASRFAQWAIHPTFNLKSLSCSLEVSKDSRTVTVSHRPQPYRWSCERFSTSQVLCSQALSSGKHYWEVDTRNCSHWAVGVASWEMSRDQVLGRTMDSCCVEWKGTSQLSAWHMVKETVLGSDRPGVVGIWLNLEEGKLAFYSVDNQEKLLYECTISASSPLYPAFWLYGLHPGNYLIIKQVKV</sequence>
<proteinExistence type="evidence at protein level"/>
<name>RN135_HUMAN</name>
<organism>
    <name type="scientific">Homo sapiens</name>
    <name type="common">Human</name>
    <dbReference type="NCBI Taxonomy" id="9606"/>
    <lineage>
        <taxon>Eukaryota</taxon>
        <taxon>Metazoa</taxon>
        <taxon>Chordata</taxon>
        <taxon>Craniata</taxon>
        <taxon>Vertebrata</taxon>
        <taxon>Euteleostomi</taxon>
        <taxon>Mammalia</taxon>
        <taxon>Eutheria</taxon>
        <taxon>Euarchontoglires</taxon>
        <taxon>Primates</taxon>
        <taxon>Haplorrhini</taxon>
        <taxon>Catarrhini</taxon>
        <taxon>Hominidae</taxon>
        <taxon>Homo</taxon>
    </lineage>
</organism>
<feature type="chain" id="PRO_0000280557" description="E3 ubiquitin-protein ligase RNF135">
    <location>
        <begin position="1"/>
        <end position="432"/>
    </location>
</feature>
<feature type="domain" description="B30.2/SPRY" evidence="3">
    <location>
        <begin position="241"/>
        <end position="432"/>
    </location>
</feature>
<feature type="zinc finger region" description="RING-type" evidence="2">
    <location>
        <begin position="21"/>
        <end position="63"/>
    </location>
</feature>
<feature type="region of interest" description="Disordered" evidence="4">
    <location>
        <begin position="95"/>
        <end position="121"/>
    </location>
</feature>
<feature type="coiled-coil region" evidence="1">
    <location>
        <begin position="121"/>
        <end position="156"/>
    </location>
</feature>
<feature type="coiled-coil region" evidence="1">
    <location>
        <begin position="191"/>
        <end position="216"/>
    </location>
</feature>
<feature type="compositionally biased region" description="Low complexity" evidence="4">
    <location>
        <begin position="102"/>
        <end position="114"/>
    </location>
</feature>
<feature type="splice variant" id="VSP_023785" description="In isoform 2." evidence="14 15">
    <original>AFSSGVDLSMASPKLVTSDTAAGKIRDILHDLEEIQEK</original>
    <variation>ENSWKPRLPPHAHCLTRATLHSGELLGLLSGPSIQPLT</variation>
    <location>
        <begin position="173"/>
        <end position="210"/>
    </location>
</feature>
<feature type="splice variant" id="VSP_023786" description="In isoform 2." evidence="14 15">
    <location>
        <begin position="211"/>
        <end position="432"/>
    </location>
</feature>
<feature type="splice variant" id="VSP_045359" description="In isoform 3." evidence="15">
    <original>ELLEAPSSSSCPLPDQSHPALRRASRFAQWAIHPTFNLKSLSCSLEVSKDSRTVTVSHR</original>
    <variation>SLLPRLECSGTITAASISQAQENSWKPRLPPHAHCLTRATLHSGELLGLLSGPSIQPLT</variation>
    <location>
        <begin position="228"/>
        <end position="286"/>
    </location>
</feature>
<feature type="splice variant" id="VSP_045360" description="In isoform 3." evidence="15">
    <location>
        <begin position="287"/>
        <end position="432"/>
    </location>
</feature>
<feature type="sequence variant" id="VAR_031165" description="In dbSNP:rs7225888." evidence="7">
    <original>H</original>
    <variation>Q</variation>
    <location>
        <position position="71"/>
    </location>
</feature>
<feature type="sequence variant" id="VAR_031166" description="In dbSNP:rs7211440." evidence="7">
    <original>S</original>
    <variation>P</variation>
    <location>
        <position position="108"/>
    </location>
</feature>
<feature type="sequence variant" id="VAR_063495" description="In dbSNP:rs111902263." evidence="7">
    <original>R</original>
    <variation>K</variation>
    <location>
        <position position="115"/>
    </location>
</feature>
<feature type="sequence variant" id="VAR_037652" description="Found in an individual with overgrowth, learning disability and dysmorphic features; uncertain significance; dbSNP:rs121918162." evidence="5">
    <original>R</original>
    <variation>H</variation>
    <location>
        <position position="286"/>
    </location>
</feature>
<feature type="sequence variant" id="VAR_063496" description="In dbSNP:rs61749868." evidence="7">
    <original>W</original>
    <variation>C</variation>
    <location>
        <position position="415"/>
    </location>
</feature>
<feature type="mutagenesis site" description="Prevents degradation by hepatitis C virus NS3/NS4A." evidence="11">
    <original>EDD</original>
    <variation>AAA</variation>
    <location>
        <begin position="16"/>
        <end position="18"/>
    </location>
</feature>
<feature type="mutagenesis site" description="Loss of function in RIG-I signaling pathway; when associated with A-24." evidence="12">
    <original>C</original>
    <variation>A</variation>
    <location>
        <position position="21"/>
    </location>
</feature>
<feature type="mutagenesis site" description="Loss of function in RIG-I signaling pathway; when associated with A-21." evidence="12">
    <original>C</original>
    <variation>A</variation>
    <location>
        <position position="24"/>
    </location>
</feature>
<feature type="sequence conflict" description="In Ref. 1; CAD43140 and 2; AAT06743." evidence="18" ref="1 2">
    <original>V</original>
    <variation>G</variation>
    <location>
        <position position="274"/>
    </location>
</feature>
<feature type="sequence conflict" description="In Ref. 1; CAD43140 and 2; AAT06743." evidence="18" ref="1 2">
    <original>S</original>
    <variation>N</variation>
    <location>
        <position position="293"/>
    </location>
</feature>
<feature type="strand" evidence="21">
    <location>
        <begin position="278"/>
        <end position="283"/>
    </location>
</feature>
<feature type="strand" evidence="21">
    <location>
        <begin position="298"/>
        <end position="302"/>
    </location>
</feature>
<feature type="strand" evidence="21">
    <location>
        <begin position="313"/>
        <end position="318"/>
    </location>
</feature>
<feature type="strand" evidence="21">
    <location>
        <begin position="323"/>
        <end position="329"/>
    </location>
</feature>
<feature type="strand" evidence="21">
    <location>
        <begin position="332"/>
        <end position="334"/>
    </location>
</feature>
<feature type="strand" evidence="21">
    <location>
        <begin position="342"/>
        <end position="345"/>
    </location>
</feature>
<feature type="strand" evidence="21">
    <location>
        <begin position="348"/>
        <end position="351"/>
    </location>
</feature>
<feature type="strand" evidence="21">
    <location>
        <begin position="357"/>
        <end position="360"/>
    </location>
</feature>
<feature type="strand" evidence="21">
    <location>
        <begin position="374"/>
        <end position="381"/>
    </location>
</feature>
<feature type="turn" evidence="21">
    <location>
        <begin position="382"/>
        <end position="385"/>
    </location>
</feature>
<feature type="strand" evidence="21">
    <location>
        <begin position="386"/>
        <end position="388"/>
    </location>
</feature>
<feature type="strand" evidence="21">
    <location>
        <begin position="392"/>
        <end position="396"/>
    </location>
</feature>
<feature type="strand" evidence="21">
    <location>
        <begin position="412"/>
        <end position="416"/>
    </location>
</feature>
<feature type="strand" evidence="21">
    <location>
        <begin position="418"/>
        <end position="420"/>
    </location>
</feature>
<feature type="strand" evidence="21">
    <location>
        <begin position="424"/>
        <end position="426"/>
    </location>
</feature>